<name>Y939_SULTO</name>
<reference key="1">
    <citation type="journal article" date="2001" name="DNA Res.">
        <title>Complete genome sequence of an aerobic thermoacidophilic Crenarchaeon, Sulfolobus tokodaii strain7.</title>
        <authorList>
            <person name="Kawarabayasi Y."/>
            <person name="Hino Y."/>
            <person name="Horikawa H."/>
            <person name="Jin-no K."/>
            <person name="Takahashi M."/>
            <person name="Sekine M."/>
            <person name="Baba S."/>
            <person name="Ankai A."/>
            <person name="Kosugi H."/>
            <person name="Hosoyama A."/>
            <person name="Fukui S."/>
            <person name="Nagai Y."/>
            <person name="Nishijima K."/>
            <person name="Otsuka R."/>
            <person name="Nakazawa H."/>
            <person name="Takamiya M."/>
            <person name="Kato Y."/>
            <person name="Yoshizawa T."/>
            <person name="Tanaka T."/>
            <person name="Kudoh Y."/>
            <person name="Yamazaki J."/>
            <person name="Kushida N."/>
            <person name="Oguchi A."/>
            <person name="Aoki K."/>
            <person name="Masuda S."/>
            <person name="Yanagii M."/>
            <person name="Nishimura M."/>
            <person name="Yamagishi A."/>
            <person name="Oshima T."/>
            <person name="Kikuchi H."/>
        </authorList>
    </citation>
    <scope>NUCLEOTIDE SEQUENCE [LARGE SCALE GENOMIC DNA]</scope>
    <source>
        <strain>DSM 16993 / JCM 10545 / NBRC 100140 / 7</strain>
    </source>
</reference>
<proteinExistence type="inferred from homology"/>
<feature type="signal peptide" evidence="1">
    <location>
        <begin position="1"/>
        <end position="22"/>
    </location>
</feature>
<feature type="chain" id="PRO_0000016654" description="Kelch domain-containing protein STK_09390">
    <location>
        <begin position="23"/>
        <end position="709"/>
    </location>
</feature>
<feature type="repeat" description="Kelch 1">
    <location>
        <begin position="49"/>
        <end position="94"/>
    </location>
</feature>
<feature type="repeat" description="Kelch 2">
    <location>
        <begin position="96"/>
        <end position="140"/>
    </location>
</feature>
<feature type="repeat" description="Kelch 3">
    <location>
        <begin position="141"/>
        <end position="192"/>
    </location>
</feature>
<feature type="repeat" description="Kelch 4">
    <location>
        <begin position="193"/>
        <end position="240"/>
    </location>
</feature>
<feature type="repeat" description="Kelch 5">
    <location>
        <begin position="242"/>
        <end position="288"/>
    </location>
</feature>
<feature type="repeat" description="Kelch 6">
    <location>
        <begin position="290"/>
        <end position="340"/>
    </location>
</feature>
<feature type="domain" description="Fibronectin type-III 1" evidence="2">
    <location>
        <begin position="315"/>
        <end position="405"/>
    </location>
</feature>
<feature type="domain" description="Fibronectin type-III 2" evidence="2">
    <location>
        <begin position="406"/>
        <end position="488"/>
    </location>
</feature>
<feature type="domain" description="Fibronectin type-III 3" evidence="2">
    <location>
        <begin position="489"/>
        <end position="566"/>
    </location>
</feature>
<feature type="domain" description="Fibronectin type-III 4" evidence="2">
    <location>
        <begin position="568"/>
        <end position="643"/>
    </location>
</feature>
<evidence type="ECO:0000255" key="1"/>
<evidence type="ECO:0000255" key="2">
    <source>
        <dbReference type="PROSITE-ProRule" id="PRU00316"/>
    </source>
</evidence>
<dbReference type="EMBL" id="BA000023">
    <property type="protein sequence ID" value="BAB65950.1"/>
    <property type="molecule type" value="Genomic_DNA"/>
</dbReference>
<dbReference type="RefSeq" id="WP_010978932.1">
    <property type="nucleotide sequence ID" value="NC_003106.2"/>
</dbReference>
<dbReference type="SMR" id="Q973G3"/>
<dbReference type="STRING" id="273063.STK_09390"/>
<dbReference type="GeneID" id="1458900"/>
<dbReference type="KEGG" id="sto:STK_09390"/>
<dbReference type="PATRIC" id="fig|273063.9.peg.1048"/>
<dbReference type="eggNOG" id="arCOG05978">
    <property type="taxonomic scope" value="Archaea"/>
</dbReference>
<dbReference type="OrthoDB" id="41193at2157"/>
<dbReference type="BRENDA" id="3.2.1.14">
    <property type="organism ID" value="15396"/>
</dbReference>
<dbReference type="Proteomes" id="UP000001015">
    <property type="component" value="Chromosome"/>
</dbReference>
<dbReference type="CDD" id="cd00063">
    <property type="entry name" value="FN3"/>
    <property type="match status" value="2"/>
</dbReference>
<dbReference type="Gene3D" id="2.60.40.10">
    <property type="entry name" value="Immunoglobulins"/>
    <property type="match status" value="2"/>
</dbReference>
<dbReference type="Gene3D" id="2.120.10.80">
    <property type="entry name" value="Kelch-type beta propeller"/>
    <property type="match status" value="2"/>
</dbReference>
<dbReference type="InterPro" id="IPR003961">
    <property type="entry name" value="FN3_dom"/>
</dbReference>
<dbReference type="InterPro" id="IPR036116">
    <property type="entry name" value="FN3_sf"/>
</dbReference>
<dbReference type="InterPro" id="IPR011043">
    <property type="entry name" value="Gal_Oxase/kelch_b-propeller"/>
</dbReference>
<dbReference type="InterPro" id="IPR013783">
    <property type="entry name" value="Ig-like_fold"/>
</dbReference>
<dbReference type="InterPro" id="IPR015915">
    <property type="entry name" value="Kelch-typ_b-propeller"/>
</dbReference>
<dbReference type="InterPro" id="IPR006652">
    <property type="entry name" value="Kelch_1"/>
</dbReference>
<dbReference type="InterPro" id="IPR051746">
    <property type="entry name" value="Kelch_domain_containing_8"/>
</dbReference>
<dbReference type="PANTHER" id="PTHR46260">
    <property type="entry name" value="RING-TYPE DOMAIN-CONTAINING PROTEIN"/>
    <property type="match status" value="1"/>
</dbReference>
<dbReference type="PANTHER" id="PTHR46260:SF3">
    <property type="entry name" value="RING-TYPE DOMAIN-CONTAINING PROTEIN"/>
    <property type="match status" value="1"/>
</dbReference>
<dbReference type="Pfam" id="PF00041">
    <property type="entry name" value="fn3"/>
    <property type="match status" value="2"/>
</dbReference>
<dbReference type="Pfam" id="PF24681">
    <property type="entry name" value="Kelch_KLHDC2_KLHL20_DRC7"/>
    <property type="match status" value="1"/>
</dbReference>
<dbReference type="SMART" id="SM00060">
    <property type="entry name" value="FN3"/>
    <property type="match status" value="3"/>
</dbReference>
<dbReference type="SMART" id="SM00612">
    <property type="entry name" value="Kelch"/>
    <property type="match status" value="4"/>
</dbReference>
<dbReference type="SUPFAM" id="SSF49265">
    <property type="entry name" value="Fibronectin type III"/>
    <property type="match status" value="1"/>
</dbReference>
<dbReference type="SUPFAM" id="SSF50965">
    <property type="entry name" value="Galactose oxidase, central domain"/>
    <property type="match status" value="1"/>
</dbReference>
<dbReference type="PROSITE" id="PS50853">
    <property type="entry name" value="FN3"/>
    <property type="match status" value="2"/>
</dbReference>
<organism>
    <name type="scientific">Sulfurisphaera tokodaii (strain DSM 16993 / JCM 10545 / NBRC 100140 / 7)</name>
    <name type="common">Sulfolobus tokodaii</name>
    <dbReference type="NCBI Taxonomy" id="273063"/>
    <lineage>
        <taxon>Archaea</taxon>
        <taxon>Thermoproteota</taxon>
        <taxon>Thermoprotei</taxon>
        <taxon>Sulfolobales</taxon>
        <taxon>Sulfolobaceae</taxon>
        <taxon>Sulfurisphaera</taxon>
    </lineage>
</organism>
<protein>
    <recommendedName>
        <fullName>Kelch domain-containing protein STK_09390</fullName>
    </recommendedName>
</protein>
<keyword id="KW-0880">Kelch repeat</keyword>
<keyword id="KW-1185">Reference proteome</keyword>
<keyword id="KW-0677">Repeat</keyword>
<keyword id="KW-0732">Signal</keyword>
<accession>Q973G3</accession>
<sequence>MKRNTLLALVLVILIFPTLSTAYIEFTTSINQAIPDSLVYATSAYYDGKIFLIGGENLYSTPVNSVYVYENGSWYLGPSLPFSLSSAGATVCNNTLYVVGGANSTSIFGGILEFIGNGWKVITNSMPIPVYGAIVFSYDYKIYVIGGMNYSGNSLVPPVNYIQVYNLKTNSWQIIGNAPLRLAYSAYYFNGSALFVVGGFTQSATLTSSVFVYYPENNTWISLPSLPGVEAGGVLGYYNGYMYLVGGLYYVSGAYQLGEILYYYNGTWRNTNIQEQIPTQFSTSVQIGNKLIILGGFGPGNIPSNAMQTVSIYLPPPKPQIASIASGNETITVKWYDTNASGYYITYWSNFSQKVTINVGNVTSYTIKHLKDGVTYYIQIVPYNSLGNGTPSDIISATPSSVPNPPIIKVKIGNLNATLTWYDTFNGGYPIEGYYLYVNGKGINVGNITSYVLTNLTAGELYTIELIAYNKIGNSSISSVSFIAASKANLTVTVYKKINGFLVSWNSTSKAKYILTVSKENVVLLNVSTTNTSYFVKVPFGVYNISLEAVNIVGITKYAFILIYYIQPASPTVNWSITLNTVSLNWSKVSGAEYYLIYDNGKLITNTTNTAFTFNLTIGQNEIEVYAANAYYKSAPYIINDVRNYIVVVNSTAISISVPQIKVVSGENTDAPLQTNNIDLKSAIIVITVFVIALLMILVILRERSDNYW</sequence>
<gene>
    <name type="ordered locus">STK_09390</name>
</gene>